<accession>A3NWP3</accession>
<feature type="chain" id="PRO_1000047130" description="2,3,4,5-tetrahydropyridine-2,6-dicarboxylate N-succinyltransferase">
    <location>
        <begin position="1"/>
        <end position="275"/>
    </location>
</feature>
<feature type="binding site" evidence="1">
    <location>
        <position position="106"/>
    </location>
    <ligand>
        <name>substrate</name>
    </ligand>
</feature>
<feature type="binding site" evidence="1">
    <location>
        <position position="143"/>
    </location>
    <ligand>
        <name>substrate</name>
    </ligand>
</feature>
<protein>
    <recommendedName>
        <fullName evidence="1">2,3,4,5-tetrahydropyridine-2,6-dicarboxylate N-succinyltransferase</fullName>
        <ecNumber evidence="1">2.3.1.117</ecNumber>
    </recommendedName>
    <alternativeName>
        <fullName evidence="1">Tetrahydrodipicolinate N-succinyltransferase</fullName>
        <shortName evidence="1">THDP succinyltransferase</shortName>
        <shortName evidence="1">THP succinyltransferase</shortName>
        <shortName evidence="1">Tetrahydropicolinate succinylase</shortName>
    </alternativeName>
</protein>
<organism>
    <name type="scientific">Burkholderia pseudomallei (strain 1106a)</name>
    <dbReference type="NCBI Taxonomy" id="357348"/>
    <lineage>
        <taxon>Bacteria</taxon>
        <taxon>Pseudomonadati</taxon>
        <taxon>Pseudomonadota</taxon>
        <taxon>Betaproteobacteria</taxon>
        <taxon>Burkholderiales</taxon>
        <taxon>Burkholderiaceae</taxon>
        <taxon>Burkholderia</taxon>
        <taxon>pseudomallei group</taxon>
    </lineage>
</organism>
<keyword id="KW-0012">Acyltransferase</keyword>
<keyword id="KW-0028">Amino-acid biosynthesis</keyword>
<keyword id="KW-0963">Cytoplasm</keyword>
<keyword id="KW-0220">Diaminopimelate biosynthesis</keyword>
<keyword id="KW-0457">Lysine biosynthesis</keyword>
<keyword id="KW-0677">Repeat</keyword>
<keyword id="KW-0808">Transferase</keyword>
<name>DAPD_BURP0</name>
<gene>
    <name evidence="1" type="primary">dapD</name>
    <name type="ordered locus">BURPS1106A_2505</name>
</gene>
<proteinExistence type="inferred from homology"/>
<dbReference type="EC" id="2.3.1.117" evidence="1"/>
<dbReference type="EMBL" id="CP000572">
    <property type="protein sequence ID" value="ABN91453.1"/>
    <property type="molecule type" value="Genomic_DNA"/>
</dbReference>
<dbReference type="RefSeq" id="WP_004531441.1">
    <property type="nucleotide sequence ID" value="NC_009076.1"/>
</dbReference>
<dbReference type="SMR" id="A3NWP3"/>
<dbReference type="KEGG" id="bpl:BURPS1106A_2505"/>
<dbReference type="HOGENOM" id="CLU_050859_0_1_4"/>
<dbReference type="UniPathway" id="UPA00034">
    <property type="reaction ID" value="UER00019"/>
</dbReference>
<dbReference type="Proteomes" id="UP000006738">
    <property type="component" value="Chromosome I"/>
</dbReference>
<dbReference type="GO" id="GO:0005737">
    <property type="term" value="C:cytoplasm"/>
    <property type="evidence" value="ECO:0007669"/>
    <property type="project" value="UniProtKB-SubCell"/>
</dbReference>
<dbReference type="GO" id="GO:0008666">
    <property type="term" value="F:2,3,4,5-tetrahydropyridine-2,6-dicarboxylate N-succinyltransferase activity"/>
    <property type="evidence" value="ECO:0007669"/>
    <property type="project" value="UniProtKB-UniRule"/>
</dbReference>
<dbReference type="GO" id="GO:0016779">
    <property type="term" value="F:nucleotidyltransferase activity"/>
    <property type="evidence" value="ECO:0007669"/>
    <property type="project" value="TreeGrafter"/>
</dbReference>
<dbReference type="GO" id="GO:0019877">
    <property type="term" value="P:diaminopimelate biosynthetic process"/>
    <property type="evidence" value="ECO:0007669"/>
    <property type="project" value="UniProtKB-UniRule"/>
</dbReference>
<dbReference type="GO" id="GO:0009089">
    <property type="term" value="P:lysine biosynthetic process via diaminopimelate"/>
    <property type="evidence" value="ECO:0007669"/>
    <property type="project" value="UniProtKB-UniRule"/>
</dbReference>
<dbReference type="CDD" id="cd03350">
    <property type="entry name" value="LbH_THP_succinylT"/>
    <property type="match status" value="1"/>
</dbReference>
<dbReference type="Gene3D" id="2.160.10.10">
    <property type="entry name" value="Hexapeptide repeat proteins"/>
    <property type="match status" value="1"/>
</dbReference>
<dbReference type="Gene3D" id="1.10.166.10">
    <property type="entry name" value="Tetrahydrodipicolinate-N-succinyltransferase, N-terminal domain"/>
    <property type="match status" value="1"/>
</dbReference>
<dbReference type="HAMAP" id="MF_00811">
    <property type="entry name" value="DapD"/>
    <property type="match status" value="1"/>
</dbReference>
<dbReference type="InterPro" id="IPR005664">
    <property type="entry name" value="DapD_Trfase_Hexpep_rpt_fam"/>
</dbReference>
<dbReference type="InterPro" id="IPR001451">
    <property type="entry name" value="Hexapep"/>
</dbReference>
<dbReference type="InterPro" id="IPR018357">
    <property type="entry name" value="Hexapep_transf_CS"/>
</dbReference>
<dbReference type="InterPro" id="IPR023180">
    <property type="entry name" value="THP_succinylTrfase_dom1"/>
</dbReference>
<dbReference type="InterPro" id="IPR037133">
    <property type="entry name" value="THP_succinylTrfase_N_sf"/>
</dbReference>
<dbReference type="InterPro" id="IPR011004">
    <property type="entry name" value="Trimer_LpxA-like_sf"/>
</dbReference>
<dbReference type="NCBIfam" id="TIGR00965">
    <property type="entry name" value="dapD"/>
    <property type="match status" value="1"/>
</dbReference>
<dbReference type="NCBIfam" id="NF008808">
    <property type="entry name" value="PRK11830.1"/>
    <property type="match status" value="1"/>
</dbReference>
<dbReference type="PANTHER" id="PTHR19136:SF52">
    <property type="entry name" value="2,3,4,5-TETRAHYDROPYRIDINE-2,6-DICARBOXYLATE N-SUCCINYLTRANSFERASE"/>
    <property type="match status" value="1"/>
</dbReference>
<dbReference type="PANTHER" id="PTHR19136">
    <property type="entry name" value="MOLYBDENUM COFACTOR GUANYLYLTRANSFERASE"/>
    <property type="match status" value="1"/>
</dbReference>
<dbReference type="Pfam" id="PF14602">
    <property type="entry name" value="Hexapep_2"/>
    <property type="match status" value="1"/>
</dbReference>
<dbReference type="Pfam" id="PF14805">
    <property type="entry name" value="THDPS_N_2"/>
    <property type="match status" value="1"/>
</dbReference>
<dbReference type="SUPFAM" id="SSF51161">
    <property type="entry name" value="Trimeric LpxA-like enzymes"/>
    <property type="match status" value="1"/>
</dbReference>
<dbReference type="PROSITE" id="PS00101">
    <property type="entry name" value="HEXAPEP_TRANSFERASES"/>
    <property type="match status" value="1"/>
</dbReference>
<evidence type="ECO:0000255" key="1">
    <source>
        <dbReference type="HAMAP-Rule" id="MF_00811"/>
    </source>
</evidence>
<reference key="1">
    <citation type="journal article" date="2010" name="Genome Biol. Evol.">
        <title>Continuing evolution of Burkholderia mallei through genome reduction and large-scale rearrangements.</title>
        <authorList>
            <person name="Losada L."/>
            <person name="Ronning C.M."/>
            <person name="DeShazer D."/>
            <person name="Woods D."/>
            <person name="Fedorova N."/>
            <person name="Kim H.S."/>
            <person name="Shabalina S.A."/>
            <person name="Pearson T.R."/>
            <person name="Brinkac L."/>
            <person name="Tan P."/>
            <person name="Nandi T."/>
            <person name="Crabtree J."/>
            <person name="Badger J."/>
            <person name="Beckstrom-Sternberg S."/>
            <person name="Saqib M."/>
            <person name="Schutzer S.E."/>
            <person name="Keim P."/>
            <person name="Nierman W.C."/>
        </authorList>
    </citation>
    <scope>NUCLEOTIDE SEQUENCE [LARGE SCALE GENOMIC DNA]</scope>
    <source>
        <strain>1106a</strain>
    </source>
</reference>
<comment type="catalytic activity">
    <reaction evidence="1">
        <text>(S)-2,3,4,5-tetrahydrodipicolinate + succinyl-CoA + H2O = (S)-2-succinylamino-6-oxoheptanedioate + CoA</text>
        <dbReference type="Rhea" id="RHEA:17325"/>
        <dbReference type="ChEBI" id="CHEBI:15377"/>
        <dbReference type="ChEBI" id="CHEBI:15685"/>
        <dbReference type="ChEBI" id="CHEBI:16845"/>
        <dbReference type="ChEBI" id="CHEBI:57287"/>
        <dbReference type="ChEBI" id="CHEBI:57292"/>
        <dbReference type="EC" id="2.3.1.117"/>
    </reaction>
</comment>
<comment type="pathway">
    <text evidence="1">Amino-acid biosynthesis; L-lysine biosynthesis via DAP pathway; LL-2,6-diaminopimelate from (S)-tetrahydrodipicolinate (succinylase route): step 1/3.</text>
</comment>
<comment type="subunit">
    <text evidence="1">Homotrimer.</text>
</comment>
<comment type="subcellular location">
    <subcellularLocation>
        <location evidence="1">Cytoplasm</location>
    </subcellularLocation>
</comment>
<comment type="similarity">
    <text evidence="1">Belongs to the transferase hexapeptide repeat family.</text>
</comment>
<sequence>MSQQLQQIIDNTWENRAELSPKAASAEIREAVAHAIEQLDRGALRVAEKIDGAWTVHQWLKKAVLLSFRLEDNAPMPAGGYSQFYDKVPSKFANYTAEDFAAGGFRVVPPAIARRGSFIAKNVVLMPSYTNIGAYVDEGTMVDTWATVGSCAQIGKNVHLSGGVGIGGVLEPLQANPVIIEDNCFIGARSEVVEGVIVEENSVISMGVYLGQSTKIYDRETGEVTYGRIPAGSVVVAGNLPAKDGTHSLYCAVIVKKVDAKTRAKVGLNELLRGD</sequence>